<keyword id="KW-0004">4Fe-4S</keyword>
<keyword id="KW-0408">Iron</keyword>
<keyword id="KW-0411">Iron-sulfur</keyword>
<keyword id="KW-0456">Lyase</keyword>
<keyword id="KW-0479">Metal-binding</keyword>
<keyword id="KW-1185">Reference proteome</keyword>
<keyword id="KW-0949">S-adenosyl-L-methionine</keyword>
<keyword id="KW-0784">Thiamine biosynthesis</keyword>
<keyword id="KW-0862">Zinc</keyword>
<reference key="1">
    <citation type="submission" date="2006-03" db="EMBL/GenBank/DDBJ databases">
        <title>Complete sequence of Shewanella denitrificans OS217.</title>
        <authorList>
            <consortium name="US DOE Joint Genome Institute"/>
            <person name="Copeland A."/>
            <person name="Lucas S."/>
            <person name="Lapidus A."/>
            <person name="Barry K."/>
            <person name="Detter J.C."/>
            <person name="Glavina del Rio T."/>
            <person name="Hammon N."/>
            <person name="Israni S."/>
            <person name="Dalin E."/>
            <person name="Tice H."/>
            <person name="Pitluck S."/>
            <person name="Brettin T."/>
            <person name="Bruce D."/>
            <person name="Han C."/>
            <person name="Tapia R."/>
            <person name="Gilna P."/>
            <person name="Kiss H."/>
            <person name="Schmutz J."/>
            <person name="Larimer F."/>
            <person name="Land M."/>
            <person name="Hauser L."/>
            <person name="Kyrpides N."/>
            <person name="Lykidis A."/>
            <person name="Richardson P."/>
        </authorList>
    </citation>
    <scope>NUCLEOTIDE SEQUENCE [LARGE SCALE GENOMIC DNA]</scope>
    <source>
        <strain>OS217 / ATCC BAA-1090 / DSM 15013</strain>
    </source>
</reference>
<sequence>MSSRRETRASAQTFIENLKPLQHPNSEKVFLSGSRPDLRVGMRQIHQTDTLHAKTNGETLREQNPPIMVYDCAGAYSDPNADINVHAGLEKFRQSWIEERQDTELLKGVSSQFTQQRLADDGLDHLRFDALVKPRRAKAGRCVTQMHYARRGIITPEMEYIAIRENMAREHVPEGVLTQKSAGESFGACIGEPITAEFVRSEVARGRAIIPLNINHPEAEPMIIGRNFLVKVNANIGNSAVTSSIEEEVEKLVWSTRWGADTVMDLSTGRYIHETREWIIRNSPVPIGTVPIYQALEKVNGVAEDLNWEVFRDTLIEQAEQGVDYFTIHAGVLLRYVPMTAKRLTGIVSRGGSIMAKWCLSHHKESFLYEHFREICELCAAYDVSLSLGDGMRPGCIADANDEAQFAELETLGELVKIAWEYDVQTIIEGPGHVPMHLIKVNMEKQLEHCDEAPFYTLGPQTTDIAPGYDHFTSGIGAAQMAWYGCAMLCYVTPKEHLGLPNKEDVKQGLIAYKIAAHAADIAKGHPGAQVRDNALSKARFEFRWEDQYNLGLDPDTARAYHDESLPQESAKVAHFCSMCGPKFCSMKITQEVREYAADQEAKALLAQAPLAQANIQDVELISPDEYKARQATEADLAKAMAQKSAEFKSQGSALYHSIDSSGINDNKNDQQDASVVRVPSLEIEG</sequence>
<proteinExistence type="inferred from homology"/>
<protein>
    <recommendedName>
        <fullName evidence="1">Phosphomethylpyrimidine synthase</fullName>
        <ecNumber evidence="1">4.1.99.17</ecNumber>
    </recommendedName>
    <alternativeName>
        <fullName evidence="1">Hydroxymethylpyrimidine phosphate synthase</fullName>
        <shortName evidence="1">HMP-P synthase</shortName>
        <shortName evidence="1">HMP-phosphate synthase</shortName>
        <shortName evidence="1">HMPP synthase</shortName>
    </alternativeName>
    <alternativeName>
        <fullName evidence="1">Thiamine biosynthesis protein ThiC</fullName>
    </alternativeName>
</protein>
<evidence type="ECO:0000255" key="1">
    <source>
        <dbReference type="HAMAP-Rule" id="MF_00089"/>
    </source>
</evidence>
<evidence type="ECO:0000256" key="2">
    <source>
        <dbReference type="SAM" id="MobiDB-lite"/>
    </source>
</evidence>
<comment type="function">
    <text evidence="1">Catalyzes the synthesis of the hydroxymethylpyrimidine phosphate (HMP-P) moiety of thiamine from aminoimidazole ribotide (AIR) in a radical S-adenosyl-L-methionine (SAM)-dependent reaction.</text>
</comment>
<comment type="catalytic activity">
    <reaction evidence="1">
        <text>5-amino-1-(5-phospho-beta-D-ribosyl)imidazole + S-adenosyl-L-methionine = 4-amino-2-methyl-5-(phosphooxymethyl)pyrimidine + CO + 5'-deoxyadenosine + formate + L-methionine + 3 H(+)</text>
        <dbReference type="Rhea" id="RHEA:24840"/>
        <dbReference type="ChEBI" id="CHEBI:15378"/>
        <dbReference type="ChEBI" id="CHEBI:15740"/>
        <dbReference type="ChEBI" id="CHEBI:17245"/>
        <dbReference type="ChEBI" id="CHEBI:17319"/>
        <dbReference type="ChEBI" id="CHEBI:57844"/>
        <dbReference type="ChEBI" id="CHEBI:58354"/>
        <dbReference type="ChEBI" id="CHEBI:59789"/>
        <dbReference type="ChEBI" id="CHEBI:137981"/>
        <dbReference type="EC" id="4.1.99.17"/>
    </reaction>
</comment>
<comment type="cofactor">
    <cofactor evidence="1">
        <name>[4Fe-4S] cluster</name>
        <dbReference type="ChEBI" id="CHEBI:49883"/>
    </cofactor>
    <text evidence="1">Binds 1 [4Fe-4S] cluster per subunit. The cluster is coordinated with 3 cysteines and an exchangeable S-adenosyl-L-methionine.</text>
</comment>
<comment type="pathway">
    <text evidence="1">Cofactor biosynthesis; thiamine diphosphate biosynthesis.</text>
</comment>
<comment type="subunit">
    <text evidence="1">Homodimer.</text>
</comment>
<comment type="similarity">
    <text evidence="1">Belongs to the ThiC family.</text>
</comment>
<accession>Q12NC2</accession>
<feature type="chain" id="PRO_1000004801" description="Phosphomethylpyrimidine synthase">
    <location>
        <begin position="1"/>
        <end position="686"/>
    </location>
</feature>
<feature type="region of interest" description="Disordered" evidence="2">
    <location>
        <begin position="659"/>
        <end position="686"/>
    </location>
</feature>
<feature type="binding site" evidence="1">
    <location>
        <position position="235"/>
    </location>
    <ligand>
        <name>substrate</name>
    </ligand>
</feature>
<feature type="binding site" evidence="1">
    <location>
        <position position="264"/>
    </location>
    <ligand>
        <name>substrate</name>
    </ligand>
</feature>
<feature type="binding site" evidence="1">
    <location>
        <position position="293"/>
    </location>
    <ligand>
        <name>substrate</name>
    </ligand>
</feature>
<feature type="binding site" evidence="1">
    <location>
        <position position="329"/>
    </location>
    <ligand>
        <name>substrate</name>
    </ligand>
</feature>
<feature type="binding site" evidence="1">
    <location>
        <begin position="349"/>
        <end position="351"/>
    </location>
    <ligand>
        <name>substrate</name>
    </ligand>
</feature>
<feature type="binding site" evidence="1">
    <location>
        <begin position="390"/>
        <end position="393"/>
    </location>
    <ligand>
        <name>substrate</name>
    </ligand>
</feature>
<feature type="binding site" evidence="1">
    <location>
        <position position="429"/>
    </location>
    <ligand>
        <name>substrate</name>
    </ligand>
</feature>
<feature type="binding site" evidence="1">
    <location>
        <position position="433"/>
    </location>
    <ligand>
        <name>Zn(2+)</name>
        <dbReference type="ChEBI" id="CHEBI:29105"/>
    </ligand>
</feature>
<feature type="binding site" evidence="1">
    <location>
        <position position="456"/>
    </location>
    <ligand>
        <name>substrate</name>
    </ligand>
</feature>
<feature type="binding site" evidence="1">
    <location>
        <position position="497"/>
    </location>
    <ligand>
        <name>Zn(2+)</name>
        <dbReference type="ChEBI" id="CHEBI:29105"/>
    </ligand>
</feature>
<feature type="binding site" evidence="1">
    <location>
        <position position="577"/>
    </location>
    <ligand>
        <name>[4Fe-4S] cluster</name>
        <dbReference type="ChEBI" id="CHEBI:49883"/>
        <note>4Fe-4S-S-AdoMet</note>
    </ligand>
</feature>
<feature type="binding site" evidence="1">
    <location>
        <position position="580"/>
    </location>
    <ligand>
        <name>[4Fe-4S] cluster</name>
        <dbReference type="ChEBI" id="CHEBI:49883"/>
        <note>4Fe-4S-S-AdoMet</note>
    </ligand>
</feature>
<feature type="binding site" evidence="1">
    <location>
        <position position="585"/>
    </location>
    <ligand>
        <name>[4Fe-4S] cluster</name>
        <dbReference type="ChEBI" id="CHEBI:49883"/>
        <note>4Fe-4S-S-AdoMet</note>
    </ligand>
</feature>
<organism>
    <name type="scientific">Shewanella denitrificans (strain OS217 / ATCC BAA-1090 / DSM 15013)</name>
    <dbReference type="NCBI Taxonomy" id="318161"/>
    <lineage>
        <taxon>Bacteria</taxon>
        <taxon>Pseudomonadati</taxon>
        <taxon>Pseudomonadota</taxon>
        <taxon>Gammaproteobacteria</taxon>
        <taxon>Alteromonadales</taxon>
        <taxon>Shewanellaceae</taxon>
        <taxon>Shewanella</taxon>
    </lineage>
</organism>
<gene>
    <name evidence="1" type="primary">thiC</name>
    <name type="ordered locus">Sden_1770</name>
</gene>
<name>THIC_SHEDO</name>
<dbReference type="EC" id="4.1.99.17" evidence="1"/>
<dbReference type="EMBL" id="CP000302">
    <property type="protein sequence ID" value="ABE55054.1"/>
    <property type="molecule type" value="Genomic_DNA"/>
</dbReference>
<dbReference type="RefSeq" id="WP_011496211.1">
    <property type="nucleotide sequence ID" value="NC_007954.1"/>
</dbReference>
<dbReference type="SMR" id="Q12NC2"/>
<dbReference type="STRING" id="318161.Sden_1770"/>
<dbReference type="KEGG" id="sdn:Sden_1770"/>
<dbReference type="eggNOG" id="COG0422">
    <property type="taxonomic scope" value="Bacteria"/>
</dbReference>
<dbReference type="HOGENOM" id="CLU_013181_2_1_6"/>
<dbReference type="OrthoDB" id="9805897at2"/>
<dbReference type="UniPathway" id="UPA00060"/>
<dbReference type="Proteomes" id="UP000001982">
    <property type="component" value="Chromosome"/>
</dbReference>
<dbReference type="GO" id="GO:0005829">
    <property type="term" value="C:cytosol"/>
    <property type="evidence" value="ECO:0007669"/>
    <property type="project" value="TreeGrafter"/>
</dbReference>
<dbReference type="GO" id="GO:0051539">
    <property type="term" value="F:4 iron, 4 sulfur cluster binding"/>
    <property type="evidence" value="ECO:0007669"/>
    <property type="project" value="UniProtKB-KW"/>
</dbReference>
<dbReference type="GO" id="GO:0016830">
    <property type="term" value="F:carbon-carbon lyase activity"/>
    <property type="evidence" value="ECO:0007669"/>
    <property type="project" value="InterPro"/>
</dbReference>
<dbReference type="GO" id="GO:0008270">
    <property type="term" value="F:zinc ion binding"/>
    <property type="evidence" value="ECO:0007669"/>
    <property type="project" value="UniProtKB-UniRule"/>
</dbReference>
<dbReference type="GO" id="GO:0009228">
    <property type="term" value="P:thiamine biosynthetic process"/>
    <property type="evidence" value="ECO:0007669"/>
    <property type="project" value="UniProtKB-KW"/>
</dbReference>
<dbReference type="GO" id="GO:0009229">
    <property type="term" value="P:thiamine diphosphate biosynthetic process"/>
    <property type="evidence" value="ECO:0007669"/>
    <property type="project" value="UniProtKB-UniRule"/>
</dbReference>
<dbReference type="FunFam" id="3.20.20.540:FF:000001">
    <property type="entry name" value="Phosphomethylpyrimidine synthase"/>
    <property type="match status" value="1"/>
</dbReference>
<dbReference type="Gene3D" id="6.10.250.620">
    <property type="match status" value="1"/>
</dbReference>
<dbReference type="Gene3D" id="3.20.20.540">
    <property type="entry name" value="Radical SAM ThiC family, central domain"/>
    <property type="match status" value="1"/>
</dbReference>
<dbReference type="HAMAP" id="MF_00089">
    <property type="entry name" value="ThiC"/>
    <property type="match status" value="1"/>
</dbReference>
<dbReference type="InterPro" id="IPR037509">
    <property type="entry name" value="ThiC"/>
</dbReference>
<dbReference type="InterPro" id="IPR025747">
    <property type="entry name" value="ThiC-associated_dom"/>
</dbReference>
<dbReference type="InterPro" id="IPR038521">
    <property type="entry name" value="ThiC/Bza_core_dom"/>
</dbReference>
<dbReference type="InterPro" id="IPR002817">
    <property type="entry name" value="ThiC/BzaA/B"/>
</dbReference>
<dbReference type="NCBIfam" id="NF006763">
    <property type="entry name" value="PRK09284.1"/>
    <property type="match status" value="1"/>
</dbReference>
<dbReference type="NCBIfam" id="NF009895">
    <property type="entry name" value="PRK13352.1"/>
    <property type="match status" value="1"/>
</dbReference>
<dbReference type="NCBIfam" id="TIGR00190">
    <property type="entry name" value="thiC"/>
    <property type="match status" value="1"/>
</dbReference>
<dbReference type="PANTHER" id="PTHR30557:SF1">
    <property type="entry name" value="PHOSPHOMETHYLPYRIMIDINE SYNTHASE, CHLOROPLASTIC"/>
    <property type="match status" value="1"/>
</dbReference>
<dbReference type="PANTHER" id="PTHR30557">
    <property type="entry name" value="THIAMINE BIOSYNTHESIS PROTEIN THIC"/>
    <property type="match status" value="1"/>
</dbReference>
<dbReference type="Pfam" id="PF13667">
    <property type="entry name" value="ThiC-associated"/>
    <property type="match status" value="1"/>
</dbReference>
<dbReference type="Pfam" id="PF01964">
    <property type="entry name" value="ThiC_Rad_SAM"/>
    <property type="match status" value="1"/>
</dbReference>
<dbReference type="SFLD" id="SFLDF00407">
    <property type="entry name" value="phosphomethylpyrimidine_syntha"/>
    <property type="match status" value="1"/>
</dbReference>
<dbReference type="SFLD" id="SFLDG01114">
    <property type="entry name" value="phosphomethylpyrimidine_syntha"/>
    <property type="match status" value="1"/>
</dbReference>
<dbReference type="SFLD" id="SFLDS00113">
    <property type="entry name" value="Radical_SAM_Phosphomethylpyrim"/>
    <property type="match status" value="1"/>
</dbReference>